<evidence type="ECO:0000250" key="1"/>
<evidence type="ECO:0000255" key="2"/>
<evidence type="ECO:0000269" key="3">
    <source>
    </source>
</evidence>
<evidence type="ECO:0000305" key="4"/>
<evidence type="ECO:0007829" key="5">
    <source>
        <dbReference type="PDB" id="1ZE3"/>
    </source>
</evidence>
<evidence type="ECO:0007829" key="6">
    <source>
        <dbReference type="PDB" id="3OHN"/>
    </source>
</evidence>
<evidence type="ECO:0007829" key="7">
    <source>
        <dbReference type="PDB" id="3RFZ"/>
    </source>
</evidence>
<evidence type="ECO:0007829" key="8">
    <source>
        <dbReference type="PDB" id="7B0X"/>
    </source>
</evidence>
<protein>
    <recommendedName>
        <fullName>Outer membrane usher protein FimD</fullName>
    </recommendedName>
</protein>
<organism>
    <name type="scientific">Escherichia coli (strain K12)</name>
    <dbReference type="NCBI Taxonomy" id="83333"/>
    <lineage>
        <taxon>Bacteria</taxon>
        <taxon>Pseudomonadati</taxon>
        <taxon>Pseudomonadota</taxon>
        <taxon>Gammaproteobacteria</taxon>
        <taxon>Enterobacterales</taxon>
        <taxon>Enterobacteriaceae</taxon>
        <taxon>Escherichia</taxon>
    </lineage>
</organism>
<feature type="signal peptide" evidence="3">
    <location>
        <begin position="1"/>
        <end position="45"/>
    </location>
</feature>
<feature type="chain" id="PRO_0000009312" description="Outer membrane usher protein FimD">
    <location>
        <begin position="46"/>
        <end position="878"/>
    </location>
</feature>
<feature type="disulfide bond" evidence="2">
    <location>
        <begin position="855"/>
        <end position="877"/>
    </location>
</feature>
<feature type="sequence conflict" description="In Ref. 1; CAA35968." evidence="4" ref="1">
    <original>QDATAH</original>
    <variation>RTLLRT</variation>
    <location>
        <begin position="143"/>
        <end position="148"/>
    </location>
</feature>
<feature type="sequence conflict" description="In Ref. 1." evidence="4" ref="1">
    <original>DGSTQIFTVPYSSVPLLQREGHTRYSITAGEYRSGNAQQEKTRFFQSTLLH</original>
    <variation>VLAARRFLPYPIRTFPLLNVKAYSLFHYGRRIPYESRSRKKPAFSRVHYSN</variation>
    <location>
        <begin position="352"/>
        <end position="402"/>
    </location>
</feature>
<feature type="sequence conflict" description="In Ref. 1." evidence="4" ref="1">
    <original>GGDGNSGSTGYAT</original>
    <variation>EAMEIAEVQATP</variation>
    <location>
        <begin position="658"/>
        <end position="670"/>
    </location>
</feature>
<feature type="sequence conflict" description="In Ref. 1; CAA35968." evidence="4" ref="1">
    <original>APGAKDAKVENQTGVRTDWR</original>
    <variation>RLAQKMQKSKTRRGAYRLA</variation>
    <location>
        <begin position="723"/>
        <end position="742"/>
    </location>
</feature>
<feature type="helix" evidence="8">
    <location>
        <begin position="51"/>
        <end position="53"/>
    </location>
</feature>
<feature type="helix" evidence="8">
    <location>
        <begin position="61"/>
        <end position="63"/>
    </location>
</feature>
<feature type="helix" evidence="8">
    <location>
        <begin position="64"/>
        <end position="68"/>
    </location>
</feature>
<feature type="strand" evidence="8">
    <location>
        <begin position="75"/>
        <end position="84"/>
    </location>
</feature>
<feature type="strand" evidence="8">
    <location>
        <begin position="87"/>
        <end position="98"/>
    </location>
</feature>
<feature type="strand" evidence="8">
    <location>
        <begin position="104"/>
        <end position="107"/>
    </location>
</feature>
<feature type="helix" evidence="8">
    <location>
        <begin position="111"/>
        <end position="115"/>
    </location>
</feature>
<feature type="turn" evidence="8">
    <location>
        <begin position="116"/>
        <end position="118"/>
    </location>
</feature>
<feature type="helix" evidence="8">
    <location>
        <begin position="121"/>
        <end position="123"/>
    </location>
</feature>
<feature type="helix" evidence="8">
    <location>
        <begin position="127"/>
        <end position="129"/>
    </location>
</feature>
<feature type="helix" evidence="8">
    <location>
        <begin position="138"/>
        <end position="141"/>
    </location>
</feature>
<feature type="turn" evidence="5">
    <location>
        <begin position="142"/>
        <end position="144"/>
    </location>
</feature>
<feature type="strand" evidence="8">
    <location>
        <begin position="146"/>
        <end position="150"/>
    </location>
</feature>
<feature type="turn" evidence="8">
    <location>
        <begin position="151"/>
        <end position="154"/>
    </location>
</feature>
<feature type="strand" evidence="8">
    <location>
        <begin position="155"/>
        <end position="159"/>
    </location>
</feature>
<feature type="helix" evidence="8">
    <location>
        <begin position="162"/>
        <end position="164"/>
    </location>
</feature>
<feature type="helix" evidence="7">
    <location>
        <begin position="175"/>
        <end position="177"/>
    </location>
</feature>
<feature type="strand" evidence="7">
    <location>
        <begin position="184"/>
        <end position="198"/>
    </location>
</feature>
<feature type="turn" evidence="7">
    <location>
        <begin position="199"/>
        <end position="201"/>
    </location>
</feature>
<feature type="strand" evidence="7">
    <location>
        <begin position="202"/>
        <end position="217"/>
    </location>
</feature>
<feature type="strand" evidence="7">
    <location>
        <begin position="220"/>
        <end position="231"/>
    </location>
</feature>
<feature type="strand" evidence="7">
    <location>
        <begin position="243"/>
        <end position="254"/>
    </location>
</feature>
<feature type="turn" evidence="7">
    <location>
        <begin position="255"/>
        <end position="258"/>
    </location>
</feature>
<feature type="strand" evidence="7">
    <location>
        <begin position="259"/>
        <end position="267"/>
    </location>
</feature>
<feature type="strand" evidence="7">
    <location>
        <begin position="270"/>
        <end position="273"/>
    </location>
</feature>
<feature type="strand" evidence="7">
    <location>
        <begin position="277"/>
        <end position="285"/>
    </location>
</feature>
<feature type="helix" evidence="7">
    <location>
        <begin position="287"/>
        <end position="289"/>
    </location>
</feature>
<feature type="helix" evidence="7">
    <location>
        <begin position="292"/>
        <end position="294"/>
    </location>
</feature>
<feature type="strand" evidence="7">
    <location>
        <begin position="301"/>
        <end position="315"/>
    </location>
</feature>
<feature type="strand" evidence="7">
    <location>
        <begin position="318"/>
        <end position="325"/>
    </location>
</feature>
<feature type="strand" evidence="7">
    <location>
        <begin position="327"/>
        <end position="332"/>
    </location>
</feature>
<feature type="turn" evidence="6">
    <location>
        <begin position="338"/>
        <end position="341"/>
    </location>
</feature>
<feature type="strand" evidence="7">
    <location>
        <begin position="344"/>
        <end position="349"/>
    </location>
</feature>
<feature type="strand" evidence="7">
    <location>
        <begin position="351"/>
        <end position="353"/>
    </location>
</feature>
<feature type="strand" evidence="7">
    <location>
        <begin position="355"/>
        <end position="360"/>
    </location>
</feature>
<feature type="strand" evidence="7">
    <location>
        <begin position="374"/>
        <end position="383"/>
    </location>
</feature>
<feature type="strand" evidence="7">
    <location>
        <begin position="394"/>
        <end position="403"/>
    </location>
</feature>
<feature type="helix" evidence="7">
    <location>
        <begin position="405"/>
        <end position="407"/>
    </location>
</feature>
<feature type="strand" evidence="7">
    <location>
        <begin position="408"/>
        <end position="417"/>
    </location>
</feature>
<feature type="strand" evidence="7">
    <location>
        <begin position="420"/>
        <end position="432"/>
    </location>
</feature>
<feature type="strand" evidence="7">
    <location>
        <begin position="435"/>
        <end position="447"/>
    </location>
</feature>
<feature type="strand" evidence="7">
    <location>
        <begin position="453"/>
        <end position="465"/>
    </location>
</feature>
<feature type="strand" evidence="7">
    <location>
        <begin position="471"/>
        <end position="482"/>
    </location>
</feature>
<feature type="helix" evidence="7">
    <location>
        <begin position="489"/>
        <end position="493"/>
    </location>
</feature>
<feature type="strand" evidence="7">
    <location>
        <begin position="494"/>
        <end position="496"/>
    </location>
</feature>
<feature type="strand" evidence="7">
    <location>
        <begin position="525"/>
        <end position="536"/>
    </location>
</feature>
<feature type="strand" evidence="7">
    <location>
        <begin position="538"/>
        <end position="554"/>
    </location>
</feature>
<feature type="strand" evidence="7">
    <location>
        <begin position="560"/>
        <end position="570"/>
    </location>
</feature>
<feature type="strand" evidence="7">
    <location>
        <begin position="573"/>
        <end position="583"/>
    </location>
</feature>
<feature type="strand" evidence="7">
    <location>
        <begin position="585"/>
        <end position="587"/>
    </location>
</feature>
<feature type="strand" evidence="7">
    <location>
        <begin position="591"/>
        <end position="602"/>
    </location>
</feature>
<feature type="helix" evidence="7">
    <location>
        <begin position="603"/>
        <end position="605"/>
    </location>
</feature>
<feature type="helix" evidence="7">
    <location>
        <begin position="613"/>
        <end position="616"/>
    </location>
</feature>
<feature type="strand" evidence="7">
    <location>
        <begin position="617"/>
        <end position="625"/>
    </location>
</feature>
<feature type="strand" evidence="7">
    <location>
        <begin position="627"/>
        <end position="629"/>
    </location>
</feature>
<feature type="strand" evidence="7">
    <location>
        <begin position="631"/>
        <end position="642"/>
    </location>
</feature>
<feature type="turn" evidence="6">
    <location>
        <begin position="643"/>
        <end position="646"/>
    </location>
</feature>
<feature type="strand" evidence="7">
    <location>
        <begin position="647"/>
        <end position="658"/>
    </location>
</feature>
<feature type="turn" evidence="7">
    <location>
        <begin position="659"/>
        <end position="661"/>
    </location>
</feature>
<feature type="strand" evidence="7">
    <location>
        <begin position="664"/>
        <end position="674"/>
    </location>
</feature>
<feature type="strand" evidence="7">
    <location>
        <begin position="679"/>
        <end position="686"/>
    </location>
</feature>
<feature type="strand" evidence="7">
    <location>
        <begin position="691"/>
        <end position="704"/>
    </location>
</feature>
<feature type="strand" evidence="7">
    <location>
        <begin position="707"/>
        <end position="712"/>
    </location>
</feature>
<feature type="strand" evidence="7">
    <location>
        <begin position="716"/>
        <end position="722"/>
    </location>
</feature>
<feature type="strand" evidence="7">
    <location>
        <begin position="743"/>
        <end position="748"/>
    </location>
</feature>
<feature type="strand" evidence="7">
    <location>
        <begin position="756"/>
        <end position="760"/>
    </location>
</feature>
<feature type="helix" evidence="7">
    <location>
        <begin position="762"/>
        <end position="764"/>
    </location>
</feature>
<feature type="strand" evidence="7">
    <location>
        <begin position="769"/>
        <end position="772"/>
    </location>
</feature>
<feature type="strand" evidence="7">
    <location>
        <begin position="774"/>
        <end position="778"/>
    </location>
</feature>
<feature type="strand" evidence="7">
    <location>
        <begin position="785"/>
        <end position="789"/>
    </location>
</feature>
<feature type="strand" evidence="7">
    <location>
        <begin position="792"/>
        <end position="804"/>
    </location>
</feature>
<feature type="strand" evidence="7">
    <location>
        <begin position="814"/>
        <end position="821"/>
    </location>
</feature>
<feature type="strand" evidence="7">
    <location>
        <begin position="823"/>
        <end position="825"/>
    </location>
</feature>
<feature type="helix" evidence="7">
    <location>
        <begin position="828"/>
        <end position="830"/>
    </location>
</feature>
<feature type="strand" evidence="7">
    <location>
        <begin position="831"/>
        <end position="837"/>
    </location>
</feature>
<feature type="strand" evidence="7">
    <location>
        <begin position="839"/>
        <end position="847"/>
    </location>
</feature>
<feature type="strand" evidence="7">
    <location>
        <begin position="856"/>
        <end position="860"/>
    </location>
</feature>
<feature type="helix" evidence="7">
    <location>
        <begin position="863"/>
        <end position="865"/>
    </location>
</feature>
<feature type="strand" evidence="7">
    <location>
        <begin position="871"/>
        <end position="875"/>
    </location>
</feature>
<dbReference type="EMBL" id="X51655">
    <property type="protein sequence ID" value="CAA35968.1"/>
    <property type="molecule type" value="Genomic_DNA"/>
</dbReference>
<dbReference type="EMBL" id="U14003">
    <property type="protein sequence ID" value="AAA97213.1"/>
    <property type="molecule type" value="Genomic_DNA"/>
</dbReference>
<dbReference type="EMBL" id="U00096">
    <property type="protein sequence ID" value="AAC77273.1"/>
    <property type="molecule type" value="Genomic_DNA"/>
</dbReference>
<dbReference type="EMBL" id="AP009048">
    <property type="protein sequence ID" value="BAE78310.1"/>
    <property type="molecule type" value="Genomic_DNA"/>
</dbReference>
<dbReference type="PIR" id="S56542">
    <property type="entry name" value="S56542"/>
</dbReference>
<dbReference type="RefSeq" id="NP_418737.1">
    <property type="nucleotide sequence ID" value="NC_000913.3"/>
</dbReference>
<dbReference type="RefSeq" id="WP_000121005.1">
    <property type="nucleotide sequence ID" value="NZ_LN832404.1"/>
</dbReference>
<dbReference type="PDB" id="1ZDV">
    <property type="method" value="NMR"/>
    <property type="chains" value="A=70-184"/>
</dbReference>
<dbReference type="PDB" id="1ZDX">
    <property type="method" value="NMR"/>
    <property type="chains" value="A=70-170"/>
</dbReference>
<dbReference type="PDB" id="1ZE3">
    <property type="method" value="X-ray"/>
    <property type="resolution" value="1.84 A"/>
    <property type="chains" value="D=46-170"/>
</dbReference>
<dbReference type="PDB" id="3BWU">
    <property type="method" value="X-ray"/>
    <property type="resolution" value="1.76 A"/>
    <property type="chains" value="D=46-170"/>
</dbReference>
<dbReference type="PDB" id="3OHN">
    <property type="method" value="X-ray"/>
    <property type="resolution" value="3.01 A"/>
    <property type="chains" value="A/B=169-708"/>
</dbReference>
<dbReference type="PDB" id="3RFZ">
    <property type="method" value="X-ray"/>
    <property type="resolution" value="2.80 A"/>
    <property type="chains" value="B/E=46-878"/>
</dbReference>
<dbReference type="PDB" id="4J3O">
    <property type="method" value="X-ray"/>
    <property type="resolution" value="3.80 A"/>
    <property type="chains" value="D=46-878"/>
</dbReference>
<dbReference type="PDB" id="6E14">
    <property type="method" value="EM"/>
    <property type="resolution" value="4.00 A"/>
    <property type="chains" value="D=1-878"/>
</dbReference>
<dbReference type="PDB" id="6E15">
    <property type="method" value="EM"/>
    <property type="resolution" value="6.20 A"/>
    <property type="chains" value="D=1-878"/>
</dbReference>
<dbReference type="PDB" id="7B0X">
    <property type="method" value="X-ray"/>
    <property type="resolution" value="1.70 A"/>
    <property type="chains" value="D=46-170"/>
</dbReference>
<dbReference type="PDB" id="9BOG">
    <property type="method" value="EM"/>
    <property type="resolution" value="3.99 A"/>
    <property type="chains" value="D=46-878"/>
</dbReference>
<dbReference type="PDBsum" id="1ZDV"/>
<dbReference type="PDBsum" id="1ZDX"/>
<dbReference type="PDBsum" id="1ZE3"/>
<dbReference type="PDBsum" id="3BWU"/>
<dbReference type="PDBsum" id="3OHN"/>
<dbReference type="PDBsum" id="3RFZ"/>
<dbReference type="PDBsum" id="4J3O"/>
<dbReference type="PDBsum" id="6E14"/>
<dbReference type="PDBsum" id="6E15"/>
<dbReference type="PDBsum" id="7B0X"/>
<dbReference type="PDBsum" id="9BOG"/>
<dbReference type="BMRB" id="P30130"/>
<dbReference type="EMDB" id="EMD-44735"/>
<dbReference type="SMR" id="P30130"/>
<dbReference type="BioGRID" id="4262748">
    <property type="interactions" value="186"/>
</dbReference>
<dbReference type="DIP" id="DIP-9612N"/>
<dbReference type="FunCoup" id="P30130">
    <property type="interactions" value="43"/>
</dbReference>
<dbReference type="IntAct" id="P30130">
    <property type="interactions" value="7"/>
</dbReference>
<dbReference type="MINT" id="P30130"/>
<dbReference type="STRING" id="511145.b4317"/>
<dbReference type="TCDB" id="1.B.11.3.9">
    <property type="family name" value="the outer membrane fimbrial usher porin (fup) family"/>
</dbReference>
<dbReference type="PaxDb" id="511145-b4317"/>
<dbReference type="EnsemblBacteria" id="AAC77273">
    <property type="protein sequence ID" value="AAC77273"/>
    <property type="gene ID" value="b4317"/>
</dbReference>
<dbReference type="GeneID" id="948844"/>
<dbReference type="KEGG" id="ecj:JW5780"/>
<dbReference type="KEGG" id="eco:b4317"/>
<dbReference type="KEGG" id="ecoc:C3026_23320"/>
<dbReference type="PATRIC" id="fig|1411691.4.peg.2375"/>
<dbReference type="EchoBASE" id="EB0307"/>
<dbReference type="eggNOG" id="COG3188">
    <property type="taxonomic scope" value="Bacteria"/>
</dbReference>
<dbReference type="HOGENOM" id="CLU_009120_3_1_6"/>
<dbReference type="InParanoid" id="P30130"/>
<dbReference type="OMA" id="VPQAFMG"/>
<dbReference type="OrthoDB" id="6554712at2"/>
<dbReference type="PhylomeDB" id="P30130"/>
<dbReference type="BioCyc" id="EcoCyc:EG10311-MONOMER"/>
<dbReference type="EvolutionaryTrace" id="P30130"/>
<dbReference type="PRO" id="PR:P30130"/>
<dbReference type="Proteomes" id="UP000000625">
    <property type="component" value="Chromosome"/>
</dbReference>
<dbReference type="GO" id="GO:0009279">
    <property type="term" value="C:cell outer membrane"/>
    <property type="evidence" value="ECO:0000314"/>
    <property type="project" value="EcoCyc"/>
</dbReference>
<dbReference type="GO" id="GO:0015473">
    <property type="term" value="F:fimbrial usher porin activity"/>
    <property type="evidence" value="ECO:0000314"/>
    <property type="project" value="EcoCyc"/>
</dbReference>
<dbReference type="GO" id="GO:0009297">
    <property type="term" value="P:pilus assembly"/>
    <property type="evidence" value="ECO:0000314"/>
    <property type="project" value="EcoCyc"/>
</dbReference>
<dbReference type="DisProt" id="DP02537"/>
<dbReference type="FunFam" id="2.60.40.2070:FF:000001">
    <property type="entry name" value="Fimbrial outer membrane usher protein"/>
    <property type="match status" value="1"/>
</dbReference>
<dbReference type="FunFam" id="2.60.40.2610:FF:000001">
    <property type="entry name" value="Outer membrane fimbrial usher protein"/>
    <property type="match status" value="1"/>
</dbReference>
<dbReference type="FunFam" id="2.60.40.3110:FF:000001">
    <property type="entry name" value="Putative fimbrial outer membrane usher"/>
    <property type="match status" value="1"/>
</dbReference>
<dbReference type="Gene3D" id="2.60.40.2070">
    <property type="match status" value="1"/>
</dbReference>
<dbReference type="Gene3D" id="2.60.40.3110">
    <property type="match status" value="1"/>
</dbReference>
<dbReference type="Gene3D" id="3.10.20.410">
    <property type="match status" value="1"/>
</dbReference>
<dbReference type="Gene3D" id="2.60.40.2610">
    <property type="entry name" value="Outer membrane usher protein FimD, plug domain"/>
    <property type="match status" value="1"/>
</dbReference>
<dbReference type="InterPro" id="IPR000015">
    <property type="entry name" value="Fimb_usher"/>
</dbReference>
<dbReference type="InterPro" id="IPR018030">
    <property type="entry name" value="Fimbrial_membr_usher_CS"/>
</dbReference>
<dbReference type="InterPro" id="IPR042186">
    <property type="entry name" value="FimD_plug_dom"/>
</dbReference>
<dbReference type="InterPro" id="IPR025949">
    <property type="entry name" value="PapC-like_C"/>
</dbReference>
<dbReference type="InterPro" id="IPR043142">
    <property type="entry name" value="PapC-like_C_sf"/>
</dbReference>
<dbReference type="InterPro" id="IPR025885">
    <property type="entry name" value="PapC_N"/>
</dbReference>
<dbReference type="InterPro" id="IPR037224">
    <property type="entry name" value="PapC_N_sf"/>
</dbReference>
<dbReference type="NCBIfam" id="NF011740">
    <property type="entry name" value="PRK15193.1"/>
    <property type="match status" value="1"/>
</dbReference>
<dbReference type="NCBIfam" id="NF011745">
    <property type="entry name" value="PRK15198.1"/>
    <property type="match status" value="1"/>
</dbReference>
<dbReference type="PANTHER" id="PTHR30451:SF21">
    <property type="entry name" value="FIMBRIAL USHER DOMAIN-CONTAINING PROTEIN YDET-RELATED"/>
    <property type="match status" value="1"/>
</dbReference>
<dbReference type="PANTHER" id="PTHR30451">
    <property type="entry name" value="OUTER MEMBRANE USHER PROTEIN"/>
    <property type="match status" value="1"/>
</dbReference>
<dbReference type="Pfam" id="PF13953">
    <property type="entry name" value="PapC_C"/>
    <property type="match status" value="1"/>
</dbReference>
<dbReference type="Pfam" id="PF13954">
    <property type="entry name" value="PapC_N"/>
    <property type="match status" value="1"/>
</dbReference>
<dbReference type="Pfam" id="PF00577">
    <property type="entry name" value="Usher"/>
    <property type="match status" value="1"/>
</dbReference>
<dbReference type="SUPFAM" id="SSF141729">
    <property type="entry name" value="FimD N-terminal domain-like"/>
    <property type="match status" value="1"/>
</dbReference>
<dbReference type="PROSITE" id="PS01151">
    <property type="entry name" value="FIMBRIAL_USHER"/>
    <property type="match status" value="1"/>
</dbReference>
<name>FIMD_ECOLI</name>
<gene>
    <name type="primary">fimD</name>
    <name type="ordered locus">b4317</name>
    <name type="ordered locus">JW5780</name>
</gene>
<proteinExistence type="evidence at protein level"/>
<reference key="1">
    <citation type="journal article" date="1990" name="Mol. Gen. Genet.">
        <title>The fimD gene required for cell surface localization of Escherichia coli type 1 fimbriae.</title>
        <authorList>
            <person name="Klemm P."/>
            <person name="Christiansen G."/>
        </authorList>
    </citation>
    <scope>NUCLEOTIDE SEQUENCE [GENOMIC DNA]</scope>
    <source>
        <strain>K12</strain>
    </source>
</reference>
<reference key="2">
    <citation type="journal article" date="1995" name="Nucleic Acids Res.">
        <title>Analysis of the Escherichia coli genome VI: DNA sequence of the region from 92.8 through 100 minutes.</title>
        <authorList>
            <person name="Burland V.D."/>
            <person name="Plunkett G. III"/>
            <person name="Sofia H.J."/>
            <person name="Daniels D.L."/>
            <person name="Blattner F.R."/>
        </authorList>
    </citation>
    <scope>NUCLEOTIDE SEQUENCE [LARGE SCALE GENOMIC DNA]</scope>
    <source>
        <strain>K12 / MG1655 / ATCC 47076</strain>
    </source>
</reference>
<reference key="3">
    <citation type="journal article" date="1997" name="Science">
        <title>The complete genome sequence of Escherichia coli K-12.</title>
        <authorList>
            <person name="Blattner F.R."/>
            <person name="Plunkett G. III"/>
            <person name="Bloch C.A."/>
            <person name="Perna N.T."/>
            <person name="Burland V."/>
            <person name="Riley M."/>
            <person name="Collado-Vides J."/>
            <person name="Glasner J.D."/>
            <person name="Rode C.K."/>
            <person name="Mayhew G.F."/>
            <person name="Gregor J."/>
            <person name="Davis N.W."/>
            <person name="Kirkpatrick H.A."/>
            <person name="Goeden M.A."/>
            <person name="Rose D.J."/>
            <person name="Mau B."/>
            <person name="Shao Y."/>
        </authorList>
    </citation>
    <scope>NUCLEOTIDE SEQUENCE [LARGE SCALE GENOMIC DNA]</scope>
    <source>
        <strain>K12 / MG1655 / ATCC 47076</strain>
    </source>
</reference>
<reference key="4">
    <citation type="journal article" date="2006" name="Mol. Syst. Biol.">
        <title>Highly accurate genome sequences of Escherichia coli K-12 strains MG1655 and W3110.</title>
        <authorList>
            <person name="Hayashi K."/>
            <person name="Morooka N."/>
            <person name="Yamamoto Y."/>
            <person name="Fujita K."/>
            <person name="Isono K."/>
            <person name="Choi S."/>
            <person name="Ohtsubo E."/>
            <person name="Baba T."/>
            <person name="Wanner B.L."/>
            <person name="Mori H."/>
            <person name="Horiuchi T."/>
        </authorList>
    </citation>
    <scope>NUCLEOTIDE SEQUENCE [LARGE SCALE GENOMIC DNA]</scope>
    <source>
        <strain>K12 / W3110 / ATCC 27325 / DSM 5911</strain>
    </source>
</reference>
<reference key="5">
    <citation type="journal article" date="2003" name="J. Mol. Biol.">
        <title>Identification and characterization of the chaperone-subunit complex-binding domain from the type 1 pilus assembly platform FimD.</title>
        <authorList>
            <person name="Nishiyama M."/>
            <person name="Vetsch M."/>
            <person name="Puorger C."/>
            <person name="Jelesarov I."/>
            <person name="Glockshuber R."/>
        </authorList>
    </citation>
    <scope>PROTEIN SEQUENCE OF N-TERMINUS</scope>
</reference>
<sequence>MSYLNLRLYQRNTQCLHIRKHRLAGFFVRLVVACAFAAQAPLSSADLYFNPRFLADDPQAVADLSRFENGQELPPGTYRVDIYLNNGYMATRDVTFNTGDSEQGIVPCLTRAQLASMGLNTASVAGMNLLADDACVPLTTMVQDATAHLDVGQQRLNLTIPQAFMSNRARGYIPPELWDPGINAGLLNYNFSGNSVQNRIGGNSHYAYLNLQSGLNIGAWRLRDNTTWSYNSSDRSSGSKNKWQHINTWLERDIIPLRSRLTLGDGYTQGDIFDGINFRGAQLASDDNMLPDSQRGFAPVIHGIARGTAQVTIKQNGYDIYNSTVPPGPFTINDIYAAGNSGDLQVTIKEADGSTQIFTVPYSSVPLLQREGHTRYSITAGEYRSGNAQQEKTRFFQSTLLHGLPAGWTIYGGTQLADRYRAFNFGIGKNMGALGALSVDMTQANSTLPDDSQHDGQSVRFLYNKSLNESGTNIQLVGYRYSTSGYFNFADTTYSRMNGYNIETQDGVIQVKPKFTDYYNLAYNKRGKLQLTVTQQLGRTSTLYLSGSHQTYWGTSNVDEQFQAGLNTAFEDINWTLSYSLTKNAWQKGRDQMLALNVNIPFSHWLRSDSKSQWRHASASYSMSHDLNGRMTNLAGVYGTLLEDNNLSYSVQTGYAGGGDGNSGSTGYATLNYRGGYGNANIGYSHSDDIKQLYYGVSGGVLAHANGVTLGQPLNDTVVLVKAPGAKDAKVENQTGVRTDWRGYAVLPYATEYRENRVALDTNTLADNVDLDNAVANVVPTRGAIVRAEFKARVGIKLLMTLTHNNKPLPFGAMVTSESSQSSGIVADNGQVYLSGMPLAGKVQVKWGEEENAHCVANYQLPPESQQQLLTQLSAECR</sequence>
<accession>P30130</accession>
<accession>Q2M5Z6</accession>
<keyword id="KW-0002">3D-structure</keyword>
<keyword id="KW-0998">Cell outer membrane</keyword>
<keyword id="KW-0903">Direct protein sequencing</keyword>
<keyword id="KW-1015">Disulfide bond</keyword>
<keyword id="KW-1029">Fimbrium biogenesis</keyword>
<keyword id="KW-0472">Membrane</keyword>
<keyword id="KW-1185">Reference proteome</keyword>
<keyword id="KW-0732">Signal</keyword>
<keyword id="KW-0812">Transmembrane</keyword>
<keyword id="KW-1134">Transmembrane beta strand</keyword>
<keyword id="KW-0813">Transport</keyword>
<comment type="function">
    <text>Involved in the export and assembly of FimA fimbrial subunits across the outer membrane.</text>
</comment>
<comment type="interaction">
    <interactant intactId="EBI-554889">
        <id>P30130</id>
    </interactant>
    <interactant intactId="EBI-1028005">
        <id>P31697</id>
        <label>fimC</label>
    </interactant>
    <organismsDiffer>false</organismsDiffer>
    <experiments>11</experiments>
</comment>
<comment type="subcellular location">
    <subcellularLocation>
        <location evidence="1">Cell outer membrane</location>
        <topology evidence="1">Multi-pass membrane protein</topology>
    </subcellularLocation>
</comment>
<comment type="similarity">
    <text evidence="4">Belongs to the fimbrial export usher family.</text>
</comment>